<organism>
    <name type="scientific">Oryza sativa subsp. indica</name>
    <name type="common">Rice</name>
    <dbReference type="NCBI Taxonomy" id="39946"/>
    <lineage>
        <taxon>Eukaryota</taxon>
        <taxon>Viridiplantae</taxon>
        <taxon>Streptophyta</taxon>
        <taxon>Embryophyta</taxon>
        <taxon>Tracheophyta</taxon>
        <taxon>Spermatophyta</taxon>
        <taxon>Magnoliopsida</taxon>
        <taxon>Liliopsida</taxon>
        <taxon>Poales</taxon>
        <taxon>Poaceae</taxon>
        <taxon>BOP clade</taxon>
        <taxon>Oryzoideae</taxon>
        <taxon>Oryzeae</taxon>
        <taxon>Oryzinae</taxon>
        <taxon>Oryza</taxon>
        <taxon>Oryza sativa</taxon>
    </lineage>
</organism>
<name>ALFL2_ORYSI</name>
<reference key="1">
    <citation type="journal article" date="2005" name="PLoS Biol.">
        <title>The genomes of Oryza sativa: a history of duplications.</title>
        <authorList>
            <person name="Yu J."/>
            <person name="Wang J."/>
            <person name="Lin W."/>
            <person name="Li S."/>
            <person name="Li H."/>
            <person name="Zhou J."/>
            <person name="Ni P."/>
            <person name="Dong W."/>
            <person name="Hu S."/>
            <person name="Zeng C."/>
            <person name="Zhang J."/>
            <person name="Zhang Y."/>
            <person name="Li R."/>
            <person name="Xu Z."/>
            <person name="Li S."/>
            <person name="Li X."/>
            <person name="Zheng H."/>
            <person name="Cong L."/>
            <person name="Lin L."/>
            <person name="Yin J."/>
            <person name="Geng J."/>
            <person name="Li G."/>
            <person name="Shi J."/>
            <person name="Liu J."/>
            <person name="Lv H."/>
            <person name="Li J."/>
            <person name="Wang J."/>
            <person name="Deng Y."/>
            <person name="Ran L."/>
            <person name="Shi X."/>
            <person name="Wang X."/>
            <person name="Wu Q."/>
            <person name="Li C."/>
            <person name="Ren X."/>
            <person name="Wang J."/>
            <person name="Wang X."/>
            <person name="Li D."/>
            <person name="Liu D."/>
            <person name="Zhang X."/>
            <person name="Ji Z."/>
            <person name="Zhao W."/>
            <person name="Sun Y."/>
            <person name="Zhang Z."/>
            <person name="Bao J."/>
            <person name="Han Y."/>
            <person name="Dong L."/>
            <person name="Ji J."/>
            <person name="Chen P."/>
            <person name="Wu S."/>
            <person name="Liu J."/>
            <person name="Xiao Y."/>
            <person name="Bu D."/>
            <person name="Tan J."/>
            <person name="Yang L."/>
            <person name="Ye C."/>
            <person name="Zhang J."/>
            <person name="Xu J."/>
            <person name="Zhou Y."/>
            <person name="Yu Y."/>
            <person name="Zhang B."/>
            <person name="Zhuang S."/>
            <person name="Wei H."/>
            <person name="Liu B."/>
            <person name="Lei M."/>
            <person name="Yu H."/>
            <person name="Li Y."/>
            <person name="Xu H."/>
            <person name="Wei S."/>
            <person name="He X."/>
            <person name="Fang L."/>
            <person name="Zhang Z."/>
            <person name="Zhang Y."/>
            <person name="Huang X."/>
            <person name="Su Z."/>
            <person name="Tong W."/>
            <person name="Li J."/>
            <person name="Tong Z."/>
            <person name="Li S."/>
            <person name="Ye J."/>
            <person name="Wang L."/>
            <person name="Fang L."/>
            <person name="Lei T."/>
            <person name="Chen C.-S."/>
            <person name="Chen H.-C."/>
            <person name="Xu Z."/>
            <person name="Li H."/>
            <person name="Huang H."/>
            <person name="Zhang F."/>
            <person name="Xu H."/>
            <person name="Li N."/>
            <person name="Zhao C."/>
            <person name="Li S."/>
            <person name="Dong L."/>
            <person name="Huang Y."/>
            <person name="Li L."/>
            <person name="Xi Y."/>
            <person name="Qi Q."/>
            <person name="Li W."/>
            <person name="Zhang B."/>
            <person name="Hu W."/>
            <person name="Zhang Y."/>
            <person name="Tian X."/>
            <person name="Jiao Y."/>
            <person name="Liang X."/>
            <person name="Jin J."/>
            <person name="Gao L."/>
            <person name="Zheng W."/>
            <person name="Hao B."/>
            <person name="Liu S.-M."/>
            <person name="Wang W."/>
            <person name="Yuan L."/>
            <person name="Cao M."/>
            <person name="McDermott J."/>
            <person name="Samudrala R."/>
            <person name="Wang J."/>
            <person name="Wong G.K.-S."/>
            <person name="Yang H."/>
        </authorList>
    </citation>
    <scope>NUCLEOTIDE SEQUENCE [LARGE SCALE GENOMIC DNA]</scope>
    <source>
        <strain>cv. 93-11</strain>
    </source>
</reference>
<feature type="chain" id="PRO_0000412938" description="PHD finger protein ALFIN-LIKE 2">
    <location>
        <begin position="1"/>
        <end position="244"/>
    </location>
</feature>
<feature type="zinc finger region" description="PHD-type" evidence="2">
    <location>
        <begin position="187"/>
        <end position="239"/>
    </location>
</feature>
<feature type="region of interest" description="Disordered" evidence="3">
    <location>
        <begin position="137"/>
        <end position="178"/>
    </location>
</feature>
<feature type="compositionally biased region" description="Basic and acidic residues" evidence="3">
    <location>
        <begin position="137"/>
        <end position="148"/>
    </location>
</feature>
<feature type="site" description="Histone H3K4me3 binding" evidence="1">
    <location>
        <position position="197"/>
    </location>
</feature>
<feature type="site" description="Histone H3K4me3 binding" evidence="1">
    <location>
        <position position="203"/>
    </location>
</feature>
<feature type="site" description="Histone H3K4me3 binding" evidence="1">
    <location>
        <position position="207"/>
    </location>
</feature>
<feature type="site" description="Histone H3K4me3 binding" evidence="1">
    <location>
        <position position="212"/>
    </location>
</feature>
<accession>B8B8I3</accession>
<keyword id="KW-0156">Chromatin regulator</keyword>
<keyword id="KW-0479">Metal-binding</keyword>
<keyword id="KW-0539">Nucleus</keyword>
<keyword id="KW-1185">Reference proteome</keyword>
<keyword id="KW-0804">Transcription</keyword>
<keyword id="KW-0805">Transcription regulation</keyword>
<keyword id="KW-0862">Zinc</keyword>
<keyword id="KW-0863">Zinc-finger</keyword>
<comment type="function">
    <text evidence="1">Histone-binding component that specifically recognizes H3 tails trimethylated on 'Lys-4' (H3K4me3), which mark transcription start sites of virtually all active genes.</text>
</comment>
<comment type="subunit">
    <text evidence="1">Interacts with H3K4me3 and to a lesser extent with H3K4me2.</text>
</comment>
<comment type="subcellular location">
    <subcellularLocation>
        <location evidence="1">Nucleus</location>
    </subcellularLocation>
</comment>
<comment type="domain">
    <text evidence="1">The PHD-type zinc finger mediates the binding to H3K4me3.</text>
</comment>
<comment type="similarity">
    <text evidence="4">Belongs to the Alfin family.</text>
</comment>
<sequence length="244" mass="27405">MEMAAPVSPAPRTVEDIFKDFSGRRAGLVRALTVDVDEFYGFCDPEKENLCLYGHPNGRWEVALPAEEVPPELPEPALGINFARDGMHRRDWLSLVAVHSDSWLLSVAFFFGARLNGNERKRLFSLINDHPTVLEALSDRKHGRDNKSGADNGSKSRHSGKRANDVQTKTSRPAVVDDGYDEEEHSETLCGTCGGRYNANEFWIGCDICERWFHGKCVRITPAKAEHIKHYKCPDCSSSKKSRQ</sequence>
<gene>
    <name type="ORF">OsI_25444</name>
</gene>
<dbReference type="EMBL" id="CM000132">
    <property type="protein sequence ID" value="EEC81763.1"/>
    <property type="molecule type" value="Genomic_DNA"/>
</dbReference>
<dbReference type="SMR" id="B8B8I3"/>
<dbReference type="STRING" id="39946.B8B8I3"/>
<dbReference type="iPTMnet" id="B8B8I3"/>
<dbReference type="EnsemblPlants" id="BGIOSGA024567-TA">
    <property type="protein sequence ID" value="BGIOSGA024567-PA"/>
    <property type="gene ID" value="BGIOSGA024567"/>
</dbReference>
<dbReference type="EnsemblPlants" id="OsIR64_07g0008600.01">
    <property type="protein sequence ID" value="OsIR64_07g0008600.01"/>
    <property type="gene ID" value="OsIR64_07g0008600"/>
</dbReference>
<dbReference type="EnsemblPlants" id="OsLiXu_07g0008210.01">
    <property type="protein sequence ID" value="OsLiXu_07g0008210.01"/>
    <property type="gene ID" value="OsLiXu_07g0008210"/>
</dbReference>
<dbReference type="EnsemblPlants" id="OsPr106_07g0008110.01">
    <property type="protein sequence ID" value="OsPr106_07g0008110.01"/>
    <property type="gene ID" value="OsPr106_07g0008110"/>
</dbReference>
<dbReference type="EnsemblPlants" id="OsZS97_07G008010_02">
    <property type="protein sequence ID" value="OsZS97_07G008010_02"/>
    <property type="gene ID" value="OsZS97_07G008010"/>
</dbReference>
<dbReference type="Gramene" id="BGIOSGA024567-TA">
    <property type="protein sequence ID" value="BGIOSGA024567-PA"/>
    <property type="gene ID" value="BGIOSGA024567"/>
</dbReference>
<dbReference type="Gramene" id="OsIR64_07g0008600.01">
    <property type="protein sequence ID" value="OsIR64_07g0008600.01"/>
    <property type="gene ID" value="OsIR64_07g0008600"/>
</dbReference>
<dbReference type="Gramene" id="OsLiXu_07g0008210.01">
    <property type="protein sequence ID" value="OsLiXu_07g0008210.01"/>
    <property type="gene ID" value="OsLiXu_07g0008210"/>
</dbReference>
<dbReference type="Gramene" id="OsPr106_07g0008110.01">
    <property type="protein sequence ID" value="OsPr106_07g0008110.01"/>
    <property type="gene ID" value="OsPr106_07g0008110"/>
</dbReference>
<dbReference type="Gramene" id="OsZS97_07G008010_02">
    <property type="protein sequence ID" value="OsZS97_07G008010_02"/>
    <property type="gene ID" value="OsZS97_07G008010"/>
</dbReference>
<dbReference type="HOGENOM" id="CLU_058315_1_0_1"/>
<dbReference type="OMA" id="YSMCDPE"/>
<dbReference type="Proteomes" id="UP000007015">
    <property type="component" value="Chromosome 7"/>
</dbReference>
<dbReference type="GO" id="GO:0005634">
    <property type="term" value="C:nucleus"/>
    <property type="evidence" value="ECO:0007669"/>
    <property type="project" value="UniProtKB-SubCell"/>
</dbReference>
<dbReference type="GO" id="GO:0042393">
    <property type="term" value="F:histone binding"/>
    <property type="evidence" value="ECO:0007669"/>
    <property type="project" value="InterPro"/>
</dbReference>
<dbReference type="GO" id="GO:0000976">
    <property type="term" value="F:transcription cis-regulatory region binding"/>
    <property type="evidence" value="ECO:0007669"/>
    <property type="project" value="TreeGrafter"/>
</dbReference>
<dbReference type="GO" id="GO:0003712">
    <property type="term" value="F:transcription coregulator activity"/>
    <property type="evidence" value="ECO:0007669"/>
    <property type="project" value="TreeGrafter"/>
</dbReference>
<dbReference type="GO" id="GO:0008270">
    <property type="term" value="F:zinc ion binding"/>
    <property type="evidence" value="ECO:0007669"/>
    <property type="project" value="UniProtKB-KW"/>
</dbReference>
<dbReference type="GO" id="GO:0006325">
    <property type="term" value="P:chromatin organization"/>
    <property type="evidence" value="ECO:0007669"/>
    <property type="project" value="UniProtKB-KW"/>
</dbReference>
<dbReference type="GO" id="GO:0006355">
    <property type="term" value="P:regulation of DNA-templated transcription"/>
    <property type="evidence" value="ECO:0007669"/>
    <property type="project" value="InterPro"/>
</dbReference>
<dbReference type="CDD" id="cd15613">
    <property type="entry name" value="PHD_AL_plant"/>
    <property type="match status" value="1"/>
</dbReference>
<dbReference type="FunFam" id="3.30.40.10:FF:000306">
    <property type="entry name" value="PHD finger alfin-like protein"/>
    <property type="match status" value="1"/>
</dbReference>
<dbReference type="Gene3D" id="3.30.40.10">
    <property type="entry name" value="Zinc/RING finger domain, C3HC4 (zinc finger)"/>
    <property type="match status" value="1"/>
</dbReference>
<dbReference type="InterPro" id="IPR045104">
    <property type="entry name" value="Alfin"/>
</dbReference>
<dbReference type="InterPro" id="IPR021998">
    <property type="entry name" value="Alfin_N"/>
</dbReference>
<dbReference type="InterPro" id="IPR044104">
    <property type="entry name" value="PHD_AL_plant"/>
</dbReference>
<dbReference type="InterPro" id="IPR019786">
    <property type="entry name" value="Zinc_finger_PHD-type_CS"/>
</dbReference>
<dbReference type="InterPro" id="IPR011011">
    <property type="entry name" value="Znf_FYVE_PHD"/>
</dbReference>
<dbReference type="InterPro" id="IPR001965">
    <property type="entry name" value="Znf_PHD"/>
</dbReference>
<dbReference type="InterPro" id="IPR019787">
    <property type="entry name" value="Znf_PHD-finger"/>
</dbReference>
<dbReference type="InterPro" id="IPR013083">
    <property type="entry name" value="Znf_RING/FYVE/PHD"/>
</dbReference>
<dbReference type="PANTHER" id="PTHR12321">
    <property type="entry name" value="CPG BINDING PROTEIN"/>
    <property type="match status" value="1"/>
</dbReference>
<dbReference type="PANTHER" id="PTHR12321:SF39">
    <property type="entry name" value="PHD FINGER PROTEIN ALFIN-LIKE 2"/>
    <property type="match status" value="1"/>
</dbReference>
<dbReference type="Pfam" id="PF12165">
    <property type="entry name" value="Alfin"/>
    <property type="match status" value="1"/>
</dbReference>
<dbReference type="Pfam" id="PF00628">
    <property type="entry name" value="PHD"/>
    <property type="match status" value="1"/>
</dbReference>
<dbReference type="SMART" id="SM00249">
    <property type="entry name" value="PHD"/>
    <property type="match status" value="1"/>
</dbReference>
<dbReference type="SUPFAM" id="SSF57903">
    <property type="entry name" value="FYVE/PHD zinc finger"/>
    <property type="match status" value="1"/>
</dbReference>
<dbReference type="PROSITE" id="PS01359">
    <property type="entry name" value="ZF_PHD_1"/>
    <property type="match status" value="1"/>
</dbReference>
<dbReference type="PROSITE" id="PS50016">
    <property type="entry name" value="ZF_PHD_2"/>
    <property type="match status" value="1"/>
</dbReference>
<evidence type="ECO:0000250" key="1"/>
<evidence type="ECO:0000255" key="2">
    <source>
        <dbReference type="PROSITE-ProRule" id="PRU00146"/>
    </source>
</evidence>
<evidence type="ECO:0000256" key="3">
    <source>
        <dbReference type="SAM" id="MobiDB-lite"/>
    </source>
</evidence>
<evidence type="ECO:0000305" key="4"/>
<proteinExistence type="inferred from homology"/>
<protein>
    <recommendedName>
        <fullName>PHD finger protein ALFIN-LIKE 2</fullName>
    </recommendedName>
</protein>